<reference key="1">
    <citation type="journal article" date="1993" name="J. Bacteriol.">
        <title>The lonD gene is homologous to the lon gene encoding an ATP-dependent protease and is essential for the development of Myxococcus xanthus.</title>
        <authorList>
            <person name="Tojo N."/>
            <person name="Inouye S."/>
            <person name="Komano T."/>
        </authorList>
    </citation>
    <scope>NUCLEOTIDE SEQUENCE [GENOMIC DNA]</scope>
    <source>
        <strain>DZF1</strain>
    </source>
</reference>
<reference key="2">
    <citation type="journal article" date="1993" name="J. Bacteriol.">
        <title>Myxococcus xanthus encodes an ATP-dependent protease which is required for developmental gene transcription and intercellular signaling.</title>
        <authorList>
            <person name="Gill R.E."/>
            <person name="Karlok M."/>
            <person name="Benton D."/>
        </authorList>
    </citation>
    <scope>NUCLEOTIDE SEQUENCE [GENOMIC DNA]</scope>
    <scope>PROTEIN SEQUENCE OF 2-10</scope>
    <source>
        <strain>M102</strain>
    </source>
</reference>
<feature type="initiator methionine" description="Removed" evidence="5">
    <location>
        <position position="1"/>
    </location>
</feature>
<feature type="chain" id="PRO_0000076143" description="Lon protease 2">
    <location>
        <begin position="2"/>
        <end position="827"/>
    </location>
</feature>
<feature type="domain" description="Lon N-terminal" evidence="3">
    <location>
        <begin position="33"/>
        <end position="227"/>
    </location>
</feature>
<feature type="domain" description="Lon proteolytic" evidence="2">
    <location>
        <begin position="615"/>
        <end position="796"/>
    </location>
</feature>
<feature type="region of interest" description="Disordered" evidence="4">
    <location>
        <begin position="1"/>
        <end position="22"/>
    </location>
</feature>
<feature type="region of interest" description="Disordered" evidence="4">
    <location>
        <begin position="799"/>
        <end position="827"/>
    </location>
</feature>
<feature type="compositionally biased region" description="Low complexity" evidence="4">
    <location>
        <begin position="9"/>
        <end position="21"/>
    </location>
</feature>
<feature type="active site" evidence="1">
    <location>
        <position position="702"/>
    </location>
</feature>
<feature type="active site" evidence="1">
    <location>
        <position position="745"/>
    </location>
</feature>
<feature type="binding site" evidence="1">
    <location>
        <begin position="379"/>
        <end position="386"/>
    </location>
    <ligand>
        <name>ATP</name>
        <dbReference type="ChEBI" id="CHEBI:30616"/>
    </ligand>
</feature>
<sequence length="827" mass="90438">MSDEKKKGSAASAMPTAMAPPGLINKEDIPQVLPILPLRNSVFFPGGVLPLAVGRQKTIALIKDAVRDDQVIGVVTQRRAEEEDPGAADLYTMGTVARIVKLLKMGEDNYSLVVQGLARFRVVELVQEAPYLKARVDAVEDKTSSENVEVEALGINLKKLAREVIELMPELPAAATELVESITHPGHLADLIAANVDVPIEEKQAVLETVDLKARMKLVLELLNRKREILKLSNKIDSAVKGEMSKTQREYYLRQQLKAIKEELGEMGEEEEELDELQERLKKAGLPPDVEKVANKELNRLKTIPAASSEYTVARTYLDWIADLPWAKISEDNLDIENARQQLDKDHFGIKKVKKRILEYLAVRKLKNDMRGPILCLVGPPGVGKTSLGQSVAKATGRKFVRLSLGGVRDEAEIRGHRRTYVGALPGRFIQSMKKAGTKNPVMMLDEIDKLGADFRGDPSAALLEVLDPEQNNTFSDHYLDVPFDLSKVMFVATANQLDPIPGPLRDRMEIIELTGYTFEEKQSIARIHLVPKQLKEHGLSPDHIDITDEALLTLTTAYTREAGVRNLERRIADICRAVAVEVAGGKTEKQTINADRVKEILGPEMFYSEVAERTEVPGVATGLAWTAAGGDLLFIEATKMAGKGGMTLTGQLGDVMKESATAALSYLRSKAEQLGISPNFLEKTDLHLHFPAGSIPKDGPSAGVTILTALTSLLTGIRVRHDTAMTGEATLRGLVLPVGGIKEKVLAAHRAGIKRVILPERCRKDLIDVPDQARNELEFIFVTHMDDVLKAALETPPVGVAGTPGGEPGKEAPLPKPAESAPEVRA</sequence>
<proteinExistence type="evidence at protein level"/>
<name>LON2_MYXXA</name>
<evidence type="ECO:0000255" key="1">
    <source>
        <dbReference type="HAMAP-Rule" id="MF_01973"/>
    </source>
</evidence>
<evidence type="ECO:0000255" key="2">
    <source>
        <dbReference type="PROSITE-ProRule" id="PRU01122"/>
    </source>
</evidence>
<evidence type="ECO:0000255" key="3">
    <source>
        <dbReference type="PROSITE-ProRule" id="PRU01123"/>
    </source>
</evidence>
<evidence type="ECO:0000256" key="4">
    <source>
        <dbReference type="SAM" id="MobiDB-lite"/>
    </source>
</evidence>
<evidence type="ECO:0000269" key="5">
    <source>
    </source>
</evidence>
<comment type="function">
    <text evidence="1">ATP-dependent serine protease that mediates the selective degradation of mutant and abnormal proteins as well as certain short-lived regulatory proteins. Required for cellular homeostasis and for survival from DNA damage and developmental changes induced by stress. Degrades polypeptides processively to yield small peptide fragments that are 5 to 10 amino acids long. Binds to DNA in a double-stranded, site-specific manner.</text>
</comment>
<comment type="catalytic activity">
    <reaction evidence="1">
        <text>Hydrolysis of proteins in presence of ATP.</text>
        <dbReference type="EC" id="3.4.21.53"/>
    </reaction>
</comment>
<comment type="subunit">
    <text evidence="1">Homohexamer. Organized in a ring with a central cavity.</text>
</comment>
<comment type="subcellular location">
    <subcellularLocation>
        <location>Cytoplasm</location>
    </subcellularLocation>
</comment>
<comment type="developmental stage">
    <text>Expressed during both vegetative growth and development.</text>
</comment>
<comment type="induction">
    <text evidence="1">By heat shock.</text>
</comment>
<comment type="similarity">
    <text evidence="1">Belongs to the peptidase S16 family.</text>
</comment>
<protein>
    <recommendedName>
        <fullName evidence="1">Lon protease 2</fullName>
        <ecNumber evidence="1">3.4.21.53</ecNumber>
    </recommendedName>
    <alternativeName>
        <fullName evidence="1">ATP-dependent protease La 2</fullName>
    </alternativeName>
</protein>
<keyword id="KW-0067">ATP-binding</keyword>
<keyword id="KW-0963">Cytoplasm</keyword>
<keyword id="KW-0903">Direct protein sequencing</keyword>
<keyword id="KW-0378">Hydrolase</keyword>
<keyword id="KW-0547">Nucleotide-binding</keyword>
<keyword id="KW-0645">Protease</keyword>
<keyword id="KW-0720">Serine protease</keyword>
<keyword id="KW-0346">Stress response</keyword>
<organism>
    <name type="scientific">Myxococcus xanthus</name>
    <dbReference type="NCBI Taxonomy" id="34"/>
    <lineage>
        <taxon>Bacteria</taxon>
        <taxon>Pseudomonadati</taxon>
        <taxon>Myxococcota</taxon>
        <taxon>Myxococcia</taxon>
        <taxon>Myxococcales</taxon>
        <taxon>Cystobacterineae</taxon>
        <taxon>Myxococcaceae</taxon>
        <taxon>Myxococcus</taxon>
    </lineage>
</organism>
<accession>P36774</accession>
<dbReference type="EC" id="3.4.21.53" evidence="1"/>
<dbReference type="EMBL" id="D13204">
    <property type="protein sequence ID" value="BAA02491.1"/>
    <property type="molecule type" value="Genomic_DNA"/>
</dbReference>
<dbReference type="EMBL" id="L19301">
    <property type="protein sequence ID" value="AAA72018.1"/>
    <property type="molecule type" value="Unassigned_DNA"/>
</dbReference>
<dbReference type="PIR" id="A36895">
    <property type="entry name" value="A36895"/>
</dbReference>
<dbReference type="SMR" id="P36774"/>
<dbReference type="OMA" id="EYFLHQQ"/>
<dbReference type="GO" id="GO:0005737">
    <property type="term" value="C:cytoplasm"/>
    <property type="evidence" value="ECO:0007669"/>
    <property type="project" value="UniProtKB-SubCell"/>
</dbReference>
<dbReference type="GO" id="GO:0005524">
    <property type="term" value="F:ATP binding"/>
    <property type="evidence" value="ECO:0007669"/>
    <property type="project" value="UniProtKB-UniRule"/>
</dbReference>
<dbReference type="GO" id="GO:0016887">
    <property type="term" value="F:ATP hydrolysis activity"/>
    <property type="evidence" value="ECO:0007669"/>
    <property type="project" value="UniProtKB-UniRule"/>
</dbReference>
<dbReference type="GO" id="GO:0004176">
    <property type="term" value="F:ATP-dependent peptidase activity"/>
    <property type="evidence" value="ECO:0007669"/>
    <property type="project" value="UniProtKB-UniRule"/>
</dbReference>
<dbReference type="GO" id="GO:0043565">
    <property type="term" value="F:sequence-specific DNA binding"/>
    <property type="evidence" value="ECO:0007669"/>
    <property type="project" value="UniProtKB-UniRule"/>
</dbReference>
<dbReference type="GO" id="GO:0004252">
    <property type="term" value="F:serine-type endopeptidase activity"/>
    <property type="evidence" value="ECO:0007669"/>
    <property type="project" value="UniProtKB-UniRule"/>
</dbReference>
<dbReference type="GO" id="GO:0034605">
    <property type="term" value="P:cellular response to heat"/>
    <property type="evidence" value="ECO:0007669"/>
    <property type="project" value="UniProtKB-UniRule"/>
</dbReference>
<dbReference type="GO" id="GO:0006515">
    <property type="term" value="P:protein quality control for misfolded or incompletely synthesized proteins"/>
    <property type="evidence" value="ECO:0007669"/>
    <property type="project" value="UniProtKB-UniRule"/>
</dbReference>
<dbReference type="CDD" id="cd19500">
    <property type="entry name" value="RecA-like_Lon"/>
    <property type="match status" value="1"/>
</dbReference>
<dbReference type="FunFam" id="1.20.5.5270:FF:000002">
    <property type="entry name" value="Lon protease homolog"/>
    <property type="match status" value="1"/>
</dbReference>
<dbReference type="FunFam" id="3.30.230.10:FF:000019">
    <property type="entry name" value="Lon protease homolog 2, peroxisomal"/>
    <property type="match status" value="1"/>
</dbReference>
<dbReference type="FunFam" id="3.40.50.300:FF:000382">
    <property type="entry name" value="Lon protease homolog 2, peroxisomal"/>
    <property type="match status" value="1"/>
</dbReference>
<dbReference type="Gene3D" id="1.10.8.60">
    <property type="match status" value="1"/>
</dbReference>
<dbReference type="Gene3D" id="1.20.5.5270">
    <property type="match status" value="1"/>
</dbReference>
<dbReference type="Gene3D" id="1.20.58.1480">
    <property type="match status" value="1"/>
</dbReference>
<dbReference type="Gene3D" id="3.30.230.10">
    <property type="match status" value="1"/>
</dbReference>
<dbReference type="Gene3D" id="2.30.130.40">
    <property type="entry name" value="LON domain-like"/>
    <property type="match status" value="1"/>
</dbReference>
<dbReference type="Gene3D" id="3.40.50.300">
    <property type="entry name" value="P-loop containing nucleotide triphosphate hydrolases"/>
    <property type="match status" value="1"/>
</dbReference>
<dbReference type="HAMAP" id="MF_01973">
    <property type="entry name" value="lon_bact"/>
    <property type="match status" value="1"/>
</dbReference>
<dbReference type="InterPro" id="IPR003593">
    <property type="entry name" value="AAA+_ATPase"/>
</dbReference>
<dbReference type="InterPro" id="IPR003959">
    <property type="entry name" value="ATPase_AAA_core"/>
</dbReference>
<dbReference type="InterPro" id="IPR027543">
    <property type="entry name" value="Lon_bac"/>
</dbReference>
<dbReference type="InterPro" id="IPR004815">
    <property type="entry name" value="Lon_bac/euk-typ"/>
</dbReference>
<dbReference type="InterPro" id="IPR054594">
    <property type="entry name" value="Lon_lid"/>
</dbReference>
<dbReference type="InterPro" id="IPR008269">
    <property type="entry name" value="Lon_proteolytic"/>
</dbReference>
<dbReference type="InterPro" id="IPR027065">
    <property type="entry name" value="Lon_Prtase"/>
</dbReference>
<dbReference type="InterPro" id="IPR003111">
    <property type="entry name" value="Lon_prtase_N"/>
</dbReference>
<dbReference type="InterPro" id="IPR046336">
    <property type="entry name" value="Lon_prtase_N_sf"/>
</dbReference>
<dbReference type="InterPro" id="IPR027417">
    <property type="entry name" value="P-loop_NTPase"/>
</dbReference>
<dbReference type="InterPro" id="IPR008268">
    <property type="entry name" value="Peptidase_S16_AS"/>
</dbReference>
<dbReference type="InterPro" id="IPR015947">
    <property type="entry name" value="PUA-like_sf"/>
</dbReference>
<dbReference type="InterPro" id="IPR020568">
    <property type="entry name" value="Ribosomal_Su5_D2-typ_SF"/>
</dbReference>
<dbReference type="InterPro" id="IPR014721">
    <property type="entry name" value="Ribsml_uS5_D2-typ_fold_subgr"/>
</dbReference>
<dbReference type="NCBIfam" id="TIGR00763">
    <property type="entry name" value="lon"/>
    <property type="match status" value="1"/>
</dbReference>
<dbReference type="PANTHER" id="PTHR10046">
    <property type="entry name" value="ATP DEPENDENT LON PROTEASE FAMILY MEMBER"/>
    <property type="match status" value="1"/>
</dbReference>
<dbReference type="Pfam" id="PF00004">
    <property type="entry name" value="AAA"/>
    <property type="match status" value="1"/>
</dbReference>
<dbReference type="Pfam" id="PF05362">
    <property type="entry name" value="Lon_C"/>
    <property type="match status" value="1"/>
</dbReference>
<dbReference type="Pfam" id="PF22667">
    <property type="entry name" value="Lon_lid"/>
    <property type="match status" value="1"/>
</dbReference>
<dbReference type="Pfam" id="PF02190">
    <property type="entry name" value="LON_substr_bdg"/>
    <property type="match status" value="1"/>
</dbReference>
<dbReference type="PIRSF" id="PIRSF001174">
    <property type="entry name" value="Lon_proteas"/>
    <property type="match status" value="1"/>
</dbReference>
<dbReference type="PRINTS" id="PR00830">
    <property type="entry name" value="ENDOLAPTASE"/>
</dbReference>
<dbReference type="SMART" id="SM00382">
    <property type="entry name" value="AAA"/>
    <property type="match status" value="1"/>
</dbReference>
<dbReference type="SMART" id="SM00464">
    <property type="entry name" value="LON"/>
    <property type="match status" value="1"/>
</dbReference>
<dbReference type="SUPFAM" id="SSF52540">
    <property type="entry name" value="P-loop containing nucleoside triphosphate hydrolases"/>
    <property type="match status" value="1"/>
</dbReference>
<dbReference type="SUPFAM" id="SSF88697">
    <property type="entry name" value="PUA domain-like"/>
    <property type="match status" value="1"/>
</dbReference>
<dbReference type="SUPFAM" id="SSF54211">
    <property type="entry name" value="Ribosomal protein S5 domain 2-like"/>
    <property type="match status" value="1"/>
</dbReference>
<dbReference type="PROSITE" id="PS51787">
    <property type="entry name" value="LON_N"/>
    <property type="match status" value="1"/>
</dbReference>
<dbReference type="PROSITE" id="PS51786">
    <property type="entry name" value="LON_PROTEOLYTIC"/>
    <property type="match status" value="1"/>
</dbReference>
<dbReference type="PROSITE" id="PS01046">
    <property type="entry name" value="LON_SER"/>
    <property type="match status" value="1"/>
</dbReference>
<gene>
    <name evidence="1" type="primary">lon2</name>
    <name type="synonym">bsgA</name>
    <name type="synonym">lonD</name>
</gene>